<keyword id="KW-0148">Chlorophyll</keyword>
<keyword id="KW-0157">Chromophore</keyword>
<keyword id="KW-0472">Membrane</keyword>
<keyword id="KW-0602">Photosynthesis</keyword>
<keyword id="KW-0604">Photosystem II</keyword>
<keyword id="KW-1185">Reference proteome</keyword>
<keyword id="KW-0793">Thylakoid</keyword>
<keyword id="KW-0812">Transmembrane</keyword>
<keyword id="KW-1133">Transmembrane helix</keyword>
<reference key="1">
    <citation type="journal article" date="2003" name="Nature">
        <title>Genome divergence in two Prochlorococcus ecotypes reflects oceanic niche differentiation.</title>
        <authorList>
            <person name="Rocap G."/>
            <person name="Larimer F.W."/>
            <person name="Lamerdin J.E."/>
            <person name="Malfatti S."/>
            <person name="Chain P."/>
            <person name="Ahlgren N.A."/>
            <person name="Arellano A."/>
            <person name="Coleman M."/>
            <person name="Hauser L."/>
            <person name="Hess W.R."/>
            <person name="Johnson Z.I."/>
            <person name="Land M.L."/>
            <person name="Lindell D."/>
            <person name="Post A.F."/>
            <person name="Regala W."/>
            <person name="Shah M."/>
            <person name="Shaw S.L."/>
            <person name="Steglich C."/>
            <person name="Sullivan M.B."/>
            <person name="Ting C.S."/>
            <person name="Tolonen A."/>
            <person name="Webb E.A."/>
            <person name="Zinser E.R."/>
            <person name="Chisholm S.W."/>
        </authorList>
    </citation>
    <scope>NUCLEOTIDE SEQUENCE [LARGE SCALE GENOMIC DNA]</scope>
    <source>
        <strain>MIT 9313</strain>
    </source>
</reference>
<reference key="2">
    <citation type="journal article" date="2003" name="Nature">
        <title>Low-light-adapted Prochlorococcus species possess specific antennae for each photosystem.</title>
        <authorList>
            <person name="Bibby T.S."/>
            <person name="Mary I."/>
            <person name="Nield J."/>
            <person name="Partensky F."/>
            <person name="Barber J."/>
        </authorList>
    </citation>
    <scope>SUBCELLULAR LOCATION</scope>
    <scope>INDUCTION</scope>
    <scope>INVOLVEMENT IN COMPLEXES WITH PHOTOSYSTEM II</scope>
    <scope>SUBUNIT</scope>
</reference>
<dbReference type="EMBL" id="BX548175">
    <property type="protein sequence ID" value="CAE20671.1"/>
    <property type="molecule type" value="Genomic_DNA"/>
</dbReference>
<dbReference type="RefSeq" id="WP_011129875.1">
    <property type="nucleotide sequence ID" value="NC_005071.1"/>
</dbReference>
<dbReference type="SMR" id="Q7V872"/>
<dbReference type="KEGG" id="pmt:PMT_0496"/>
<dbReference type="eggNOG" id="ENOG5033QV9">
    <property type="taxonomic scope" value="Bacteria"/>
</dbReference>
<dbReference type="HOGENOM" id="CLU_028310_0_0_3"/>
<dbReference type="OrthoDB" id="541763at2"/>
<dbReference type="Proteomes" id="UP000001423">
    <property type="component" value="Chromosome"/>
</dbReference>
<dbReference type="GO" id="GO:0009523">
    <property type="term" value="C:photosystem II"/>
    <property type="evidence" value="ECO:0007669"/>
    <property type="project" value="UniProtKB-KW"/>
</dbReference>
<dbReference type="GO" id="GO:0031676">
    <property type="term" value="C:plasma membrane-derived thylakoid membrane"/>
    <property type="evidence" value="ECO:0007669"/>
    <property type="project" value="UniProtKB-SubCell"/>
</dbReference>
<dbReference type="GO" id="GO:0016168">
    <property type="term" value="F:chlorophyll binding"/>
    <property type="evidence" value="ECO:0007669"/>
    <property type="project" value="UniProtKB-KW"/>
</dbReference>
<dbReference type="GO" id="GO:0009767">
    <property type="term" value="P:photosynthetic electron transport chain"/>
    <property type="evidence" value="ECO:0007669"/>
    <property type="project" value="InterPro"/>
</dbReference>
<dbReference type="InterPro" id="IPR000932">
    <property type="entry name" value="PS_antenna-like"/>
</dbReference>
<dbReference type="InterPro" id="IPR036001">
    <property type="entry name" value="PS_II_antenna-like_sf"/>
</dbReference>
<dbReference type="NCBIfam" id="TIGR03041">
    <property type="entry name" value="PS_antenn_a_b"/>
    <property type="match status" value="1"/>
</dbReference>
<dbReference type="Pfam" id="PF00421">
    <property type="entry name" value="PSII"/>
    <property type="match status" value="1"/>
</dbReference>
<dbReference type="SUPFAM" id="SSF161077">
    <property type="entry name" value="Photosystem II antenna protein-like"/>
    <property type="match status" value="1"/>
</dbReference>
<feature type="chain" id="PRO_0000077546" description="Divinyl chlorophyll a/b light-harvesting protein PcbA">
    <location>
        <begin position="1"/>
        <end position="368"/>
    </location>
</feature>
<feature type="transmembrane region" description="Helical" evidence="2">
    <location>
        <begin position="27"/>
        <end position="47"/>
    </location>
</feature>
<feature type="transmembrane region" description="Helical" evidence="2">
    <location>
        <begin position="63"/>
        <end position="83"/>
    </location>
</feature>
<feature type="transmembrane region" description="Helical" evidence="2">
    <location>
        <begin position="89"/>
        <end position="109"/>
    </location>
</feature>
<feature type="transmembrane region" description="Helical" evidence="2">
    <location>
        <begin position="203"/>
        <end position="223"/>
    </location>
</feature>
<feature type="transmembrane region" description="Helical" evidence="2">
    <location>
        <begin position="243"/>
        <end position="263"/>
    </location>
</feature>
<feature type="transmembrane region" description="Helical" evidence="2">
    <location>
        <begin position="307"/>
        <end position="327"/>
    </location>
</feature>
<comment type="function">
    <text evidence="1">The antenna complex functions as a light receptor, it captures and delivers excitation energy to photosystems II. The Prochlorales pcb genes are not related to higher plant LHCs.</text>
</comment>
<comment type="cofactor">
    <cofactor evidence="1">
        <name>divinyl chlorophyll a</name>
        <dbReference type="ChEBI" id="CHEBI:73095"/>
    </cofactor>
</comment>
<comment type="cofactor">
    <cofactor evidence="1">
        <name>divinyl chlorophyll b</name>
        <dbReference type="ChEBI" id="CHEBI:73096"/>
    </cofactor>
</comment>
<comment type="subunit">
    <text evidence="1 3">The antenna complex consists of divinyl chlorophylls (a and b) and divinyl chlorophyll a/b binding proteins (By similarity). Forms complexes with PSII, consisting of a PSII dimer and 4 or 8 PcbA subunits. These complexes are also found under conditions of iron-starvation.</text>
</comment>
<comment type="subcellular location">
    <subcellularLocation>
        <location evidence="3">Cellular thylakoid membrane</location>
        <topology evidence="3">Multi-pass membrane protein</topology>
    </subcellularLocation>
</comment>
<comment type="induction">
    <text evidence="3">Transcription decreases upon iron starvation.</text>
</comment>
<comment type="similarity">
    <text evidence="4">Belongs to the PsbB/PsbC family. IsiA/Pcb subfamily.</text>
</comment>
<sequence length="368" mass="40769">MQTYGKTDVTYAWYAGNSGVTNRSGRFIASHIGHTGLICFGAGANTLFELARYDSALPIGDQGFVVLPHLAGLGIGGIENGVITDSYGMLVVAVFHLIFSAVYAGGAMLHSFRYKEDLGEYPQGSRPNKFDFKWDDPDRLTFILGHHLLFLGLGCVQFVEWAKYHGIYDPAMGVVRKVEYNLDLSMVWNHQIDFLTINSLEDVMGGHAFLAFFLSAGAIWHIFSKPFGEYTEFKGKGLLSAEFVLSTSLAGAAFIAFVAAFWASMNTTIYPTDLYGGPLNIELNFAPYFSDTDPLFGGDLHSARSWLSNFHFYLGFFYLQGHFWHGLRAMGFDFKRVEKLFDQLESNEISLNPAKSTTVPSTSTDSAT</sequence>
<name>PCBA_PROMM</name>
<evidence type="ECO:0000250" key="1">
    <source>
        <dbReference type="UniProtKB" id="Q6Q972"/>
    </source>
</evidence>
<evidence type="ECO:0000255" key="2"/>
<evidence type="ECO:0000269" key="3">
    <source>
    </source>
</evidence>
<evidence type="ECO:0000305" key="4"/>
<gene>
    <name type="primary">pcbA</name>
    <name type="ordered locus">PMT_0496</name>
</gene>
<protein>
    <recommendedName>
        <fullName>Divinyl chlorophyll a/b light-harvesting protein PcbA</fullName>
    </recommendedName>
</protein>
<proteinExistence type="evidence at protein level"/>
<organism>
    <name type="scientific">Prochlorococcus marinus (strain MIT 9313)</name>
    <dbReference type="NCBI Taxonomy" id="74547"/>
    <lineage>
        <taxon>Bacteria</taxon>
        <taxon>Bacillati</taxon>
        <taxon>Cyanobacteriota</taxon>
        <taxon>Cyanophyceae</taxon>
        <taxon>Synechococcales</taxon>
        <taxon>Prochlorococcaceae</taxon>
        <taxon>Prochlorococcus</taxon>
    </lineage>
</organism>
<accession>Q7V872</accession>